<dbReference type="EC" id="6.3.2.2" evidence="1"/>
<dbReference type="EMBL" id="CU928145">
    <property type="protein sequence ID" value="CAU98841.1"/>
    <property type="molecule type" value="Genomic_DNA"/>
</dbReference>
<dbReference type="RefSeq" id="WP_000611800.1">
    <property type="nucleotide sequence ID" value="NC_011748.1"/>
</dbReference>
<dbReference type="SMR" id="B7LEA4"/>
<dbReference type="KEGG" id="eck:EC55989_2955"/>
<dbReference type="HOGENOM" id="CLU_020728_3_0_6"/>
<dbReference type="UniPathway" id="UPA00142">
    <property type="reaction ID" value="UER00209"/>
</dbReference>
<dbReference type="Proteomes" id="UP000000746">
    <property type="component" value="Chromosome"/>
</dbReference>
<dbReference type="GO" id="GO:0005829">
    <property type="term" value="C:cytosol"/>
    <property type="evidence" value="ECO:0007669"/>
    <property type="project" value="TreeGrafter"/>
</dbReference>
<dbReference type="GO" id="GO:0005524">
    <property type="term" value="F:ATP binding"/>
    <property type="evidence" value="ECO:0007669"/>
    <property type="project" value="UniProtKB-KW"/>
</dbReference>
<dbReference type="GO" id="GO:0004357">
    <property type="term" value="F:glutamate-cysteine ligase activity"/>
    <property type="evidence" value="ECO:0007669"/>
    <property type="project" value="UniProtKB-UniRule"/>
</dbReference>
<dbReference type="GO" id="GO:0046872">
    <property type="term" value="F:metal ion binding"/>
    <property type="evidence" value="ECO:0007669"/>
    <property type="project" value="TreeGrafter"/>
</dbReference>
<dbReference type="GO" id="GO:0006750">
    <property type="term" value="P:glutathione biosynthetic process"/>
    <property type="evidence" value="ECO:0007669"/>
    <property type="project" value="UniProtKB-UniRule"/>
</dbReference>
<dbReference type="FunFam" id="3.30.590.20:FF:000001">
    <property type="entry name" value="Glutamate--cysteine ligase"/>
    <property type="match status" value="1"/>
</dbReference>
<dbReference type="Gene3D" id="3.30.590.20">
    <property type="match status" value="1"/>
</dbReference>
<dbReference type="HAMAP" id="MF_00578">
    <property type="entry name" value="Glu_cys_ligase"/>
    <property type="match status" value="1"/>
</dbReference>
<dbReference type="InterPro" id="IPR014746">
    <property type="entry name" value="Gln_synth/guanido_kin_cat_dom"/>
</dbReference>
<dbReference type="InterPro" id="IPR007370">
    <property type="entry name" value="Glu_cys_ligase"/>
</dbReference>
<dbReference type="InterPro" id="IPR006334">
    <property type="entry name" value="Glut_cys_ligase"/>
</dbReference>
<dbReference type="NCBIfam" id="TIGR01434">
    <property type="entry name" value="glu_cys_ligase"/>
    <property type="match status" value="1"/>
</dbReference>
<dbReference type="PANTHER" id="PTHR38761">
    <property type="entry name" value="GLUTAMATE--CYSTEINE LIGASE"/>
    <property type="match status" value="1"/>
</dbReference>
<dbReference type="PANTHER" id="PTHR38761:SF1">
    <property type="entry name" value="GLUTAMATE--CYSTEINE LIGASE"/>
    <property type="match status" value="1"/>
</dbReference>
<dbReference type="Pfam" id="PF04262">
    <property type="entry name" value="Glu_cys_ligase"/>
    <property type="match status" value="1"/>
</dbReference>
<dbReference type="SUPFAM" id="SSF55931">
    <property type="entry name" value="Glutamine synthetase/guanido kinase"/>
    <property type="match status" value="1"/>
</dbReference>
<organism>
    <name type="scientific">Escherichia coli (strain 55989 / EAEC)</name>
    <dbReference type="NCBI Taxonomy" id="585055"/>
    <lineage>
        <taxon>Bacteria</taxon>
        <taxon>Pseudomonadati</taxon>
        <taxon>Pseudomonadota</taxon>
        <taxon>Gammaproteobacteria</taxon>
        <taxon>Enterobacterales</taxon>
        <taxon>Enterobacteriaceae</taxon>
        <taxon>Escherichia</taxon>
    </lineage>
</organism>
<name>GSH1_ECO55</name>
<keyword id="KW-0067">ATP-binding</keyword>
<keyword id="KW-0317">Glutathione biosynthesis</keyword>
<keyword id="KW-0436">Ligase</keyword>
<keyword id="KW-0547">Nucleotide-binding</keyword>
<keyword id="KW-1185">Reference proteome</keyword>
<accession>B7LEA4</accession>
<evidence type="ECO:0000255" key="1">
    <source>
        <dbReference type="HAMAP-Rule" id="MF_00578"/>
    </source>
</evidence>
<sequence length="518" mass="58285">MIPDVSQALAWLEKHPQALKGIQRGLERETLRVNADGTLATTGHPEALGSALTHKWITTDFAEALLEFITPVDGDIEHMLTFMRDLHRYTARNMGDERMWPLSMPCYIAEGQDIELAQYGTSNTGRFKTLYREGLKNRYGALMQTISGVHYNFSLPMAFWQAKCGDISGADAKEKISAGYFRVIRNYYRFGWVIPYLFGASPAICSSFLQGKPTSLPFEKTECGMYYLPYATSLRLSDLGYTNKSQSNLGITFNDLYEYVAGLKQAIKTPSEEYAKIGIEKDGKRLQINSNVLQIENELYAPIRPKRVTRSGESPSDALLRGGIEYIEVRSLDINPFSPIGVDEQQVRFLDLFMVWCALADAPEMSSSELACTRVNWNRVILEGRKPGLTLGIGCETAQFPLLQVGKDLFRDLKRVAQTLDSINGGEAYQKVCDELVACFDNPDLTFSARILRSMIDTGIGGTGKAFAEAYRNLLREEPLEILREEDFVAEREASERRQQEMEAADTEPFAVWLEKHA</sequence>
<protein>
    <recommendedName>
        <fullName evidence="1">Glutamate--cysteine ligase</fullName>
        <ecNumber evidence="1">6.3.2.2</ecNumber>
    </recommendedName>
    <alternativeName>
        <fullName evidence="1">Gamma-ECS</fullName>
        <shortName evidence="1">GCS</shortName>
    </alternativeName>
    <alternativeName>
        <fullName evidence="1">Gamma-glutamylcysteine synthetase</fullName>
    </alternativeName>
</protein>
<reference key="1">
    <citation type="journal article" date="2009" name="PLoS Genet.">
        <title>Organised genome dynamics in the Escherichia coli species results in highly diverse adaptive paths.</title>
        <authorList>
            <person name="Touchon M."/>
            <person name="Hoede C."/>
            <person name="Tenaillon O."/>
            <person name="Barbe V."/>
            <person name="Baeriswyl S."/>
            <person name="Bidet P."/>
            <person name="Bingen E."/>
            <person name="Bonacorsi S."/>
            <person name="Bouchier C."/>
            <person name="Bouvet O."/>
            <person name="Calteau A."/>
            <person name="Chiapello H."/>
            <person name="Clermont O."/>
            <person name="Cruveiller S."/>
            <person name="Danchin A."/>
            <person name="Diard M."/>
            <person name="Dossat C."/>
            <person name="Karoui M.E."/>
            <person name="Frapy E."/>
            <person name="Garry L."/>
            <person name="Ghigo J.M."/>
            <person name="Gilles A.M."/>
            <person name="Johnson J."/>
            <person name="Le Bouguenec C."/>
            <person name="Lescat M."/>
            <person name="Mangenot S."/>
            <person name="Martinez-Jehanne V."/>
            <person name="Matic I."/>
            <person name="Nassif X."/>
            <person name="Oztas S."/>
            <person name="Petit M.A."/>
            <person name="Pichon C."/>
            <person name="Rouy Z."/>
            <person name="Ruf C.S."/>
            <person name="Schneider D."/>
            <person name="Tourret J."/>
            <person name="Vacherie B."/>
            <person name="Vallenet D."/>
            <person name="Medigue C."/>
            <person name="Rocha E.P.C."/>
            <person name="Denamur E."/>
        </authorList>
    </citation>
    <scope>NUCLEOTIDE SEQUENCE [LARGE SCALE GENOMIC DNA]</scope>
    <source>
        <strain>55989 / EAEC</strain>
    </source>
</reference>
<gene>
    <name evidence="1" type="primary">gshA</name>
    <name type="ordered locus">EC55989_2955</name>
</gene>
<feature type="chain" id="PRO_1000146877" description="Glutamate--cysteine ligase">
    <location>
        <begin position="1"/>
        <end position="518"/>
    </location>
</feature>
<comment type="catalytic activity">
    <reaction evidence="1">
        <text>L-cysteine + L-glutamate + ATP = gamma-L-glutamyl-L-cysteine + ADP + phosphate + H(+)</text>
        <dbReference type="Rhea" id="RHEA:13285"/>
        <dbReference type="ChEBI" id="CHEBI:15378"/>
        <dbReference type="ChEBI" id="CHEBI:29985"/>
        <dbReference type="ChEBI" id="CHEBI:30616"/>
        <dbReference type="ChEBI" id="CHEBI:35235"/>
        <dbReference type="ChEBI" id="CHEBI:43474"/>
        <dbReference type="ChEBI" id="CHEBI:58173"/>
        <dbReference type="ChEBI" id="CHEBI:456216"/>
        <dbReference type="EC" id="6.3.2.2"/>
    </reaction>
</comment>
<comment type="pathway">
    <text evidence="1">Sulfur metabolism; glutathione biosynthesis; glutathione from L-cysteine and L-glutamate: step 1/2.</text>
</comment>
<comment type="similarity">
    <text evidence="1">Belongs to the glutamate--cysteine ligase type 1 family. Type 1 subfamily.</text>
</comment>
<proteinExistence type="inferred from homology"/>